<keyword id="KW-0067">ATP-binding</keyword>
<keyword id="KW-0460">Magnesium</keyword>
<keyword id="KW-0464">Manganese</keyword>
<keyword id="KW-0479">Metal-binding</keyword>
<keyword id="KW-0547">Nucleotide-binding</keyword>
<keyword id="KW-0548">Nucleotidyltransferase</keyword>
<keyword id="KW-0808">Transferase</keyword>
<name>SELO_SALPK</name>
<proteinExistence type="inferred from homology"/>
<gene>
    <name evidence="1" type="primary">ydiU</name>
    <name evidence="1" type="synonym">selO</name>
    <name type="ordered locus">SSPA1390</name>
</gene>
<protein>
    <recommendedName>
        <fullName evidence="1">Protein nucleotidyltransferase YdiU</fullName>
        <ecNumber evidence="1">2.7.7.-</ecNumber>
    </recommendedName>
    <alternativeName>
        <fullName evidence="1">Protein adenylyltransferase YdiU</fullName>
        <ecNumber evidence="1">2.7.7.108</ecNumber>
    </alternativeName>
    <alternativeName>
        <fullName evidence="1">Protein uridylyltransferase YdiU</fullName>
        <ecNumber evidence="1">2.7.7.-</ecNumber>
    </alternativeName>
</protein>
<feature type="chain" id="PRO_1000132127" description="Protein nucleotidyltransferase YdiU">
    <location>
        <begin position="1"/>
        <end position="480"/>
    </location>
</feature>
<feature type="active site" description="Proton acceptor" evidence="1">
    <location>
        <position position="248"/>
    </location>
</feature>
<feature type="binding site" evidence="1">
    <location>
        <position position="86"/>
    </location>
    <ligand>
        <name>ATP</name>
        <dbReference type="ChEBI" id="CHEBI:30616"/>
    </ligand>
</feature>
<feature type="binding site" evidence="1">
    <location>
        <position position="88"/>
    </location>
    <ligand>
        <name>ATP</name>
        <dbReference type="ChEBI" id="CHEBI:30616"/>
    </ligand>
</feature>
<feature type="binding site" evidence="1">
    <location>
        <position position="89"/>
    </location>
    <ligand>
        <name>ATP</name>
        <dbReference type="ChEBI" id="CHEBI:30616"/>
    </ligand>
</feature>
<feature type="binding site" evidence="1">
    <location>
        <position position="109"/>
    </location>
    <ligand>
        <name>ATP</name>
        <dbReference type="ChEBI" id="CHEBI:30616"/>
    </ligand>
</feature>
<feature type="binding site" evidence="1">
    <location>
        <position position="121"/>
    </location>
    <ligand>
        <name>ATP</name>
        <dbReference type="ChEBI" id="CHEBI:30616"/>
    </ligand>
</feature>
<feature type="binding site" evidence="1">
    <location>
        <position position="122"/>
    </location>
    <ligand>
        <name>ATP</name>
        <dbReference type="ChEBI" id="CHEBI:30616"/>
    </ligand>
</feature>
<feature type="binding site" evidence="1">
    <location>
        <position position="172"/>
    </location>
    <ligand>
        <name>ATP</name>
        <dbReference type="ChEBI" id="CHEBI:30616"/>
    </ligand>
</feature>
<feature type="binding site" evidence="1">
    <location>
        <position position="179"/>
    </location>
    <ligand>
        <name>ATP</name>
        <dbReference type="ChEBI" id="CHEBI:30616"/>
    </ligand>
</feature>
<feature type="binding site" evidence="1">
    <location>
        <position position="249"/>
    </location>
    <ligand>
        <name>Mg(2+)</name>
        <dbReference type="ChEBI" id="CHEBI:18420"/>
    </ligand>
</feature>
<feature type="binding site" evidence="1">
    <location>
        <position position="258"/>
    </location>
    <ligand>
        <name>ATP</name>
        <dbReference type="ChEBI" id="CHEBI:30616"/>
    </ligand>
</feature>
<feature type="binding site" evidence="1">
    <location>
        <position position="258"/>
    </location>
    <ligand>
        <name>Mg(2+)</name>
        <dbReference type="ChEBI" id="CHEBI:18420"/>
    </ligand>
</feature>
<reference key="1">
    <citation type="journal article" date="2009" name="BMC Genomics">
        <title>Pseudogene accumulation in the evolutionary histories of Salmonella enterica serovars Paratyphi A and Typhi.</title>
        <authorList>
            <person name="Holt K.E."/>
            <person name="Thomson N.R."/>
            <person name="Wain J."/>
            <person name="Langridge G.C."/>
            <person name="Hasan R."/>
            <person name="Bhutta Z.A."/>
            <person name="Quail M.A."/>
            <person name="Norbertczak H."/>
            <person name="Walker D."/>
            <person name="Simmonds M."/>
            <person name="White B."/>
            <person name="Bason N."/>
            <person name="Mungall K."/>
            <person name="Dougan G."/>
            <person name="Parkhill J."/>
        </authorList>
    </citation>
    <scope>NUCLEOTIDE SEQUENCE [LARGE SCALE GENOMIC DNA]</scope>
    <source>
        <strain>AKU_12601</strain>
    </source>
</reference>
<organism>
    <name type="scientific">Salmonella paratyphi A (strain AKU_12601)</name>
    <dbReference type="NCBI Taxonomy" id="554290"/>
    <lineage>
        <taxon>Bacteria</taxon>
        <taxon>Pseudomonadati</taxon>
        <taxon>Pseudomonadota</taxon>
        <taxon>Gammaproteobacteria</taxon>
        <taxon>Enterobacterales</taxon>
        <taxon>Enterobacteriaceae</taxon>
        <taxon>Salmonella</taxon>
    </lineage>
</organism>
<evidence type="ECO:0000255" key="1">
    <source>
        <dbReference type="HAMAP-Rule" id="MF_00692"/>
    </source>
</evidence>
<sequence>MTLSFTARWRDELPATYTALLPTPLKNARLIWYNDELAQQLAIPASLFDATNGAGVWGGETLLPGMSPVAQVYSGHQFGVWAGQLGDGRGILLGEQLLADGSTLDWHLKGAGLTPYSRMGDGRAVLRSTIRESLASEAMHYLGIPTTRALSIVTSDTPVQRETQETGAMLMRLAQSHMRFGHFEHFYYRREPEKVQQLADFAIRHYWPQWQDVAEKYALWFEEVAARTGRLIAEWQTVGFAHGVMNTDNMSILGLTIDYGPFGFLDDYDPGFIGNHSDHQGRYRFDNQPSVALWNLQRLAQTLTPFIEIDALNRALDRYQDALLTHYGQRMRQKLGFFTEQKDDNVLLNELFSLMAREGSDYTRTFRMLSHTEQQSASSPLRDTFIDRAAFDAWFDRYRARLRTEAVDDALRQQQMQRVNPAIVLRNWLAQRAIDAAEQGDMAELHRLHEVLRQPFTDRDDDYASRPPEWGKRLEVSCSS</sequence>
<dbReference type="EC" id="2.7.7.-" evidence="1"/>
<dbReference type="EC" id="2.7.7.108" evidence="1"/>
<dbReference type="EMBL" id="FM200053">
    <property type="protein sequence ID" value="CAR59569.1"/>
    <property type="molecule type" value="Genomic_DNA"/>
</dbReference>
<dbReference type="RefSeq" id="WP_000175667.1">
    <property type="nucleotide sequence ID" value="NC_011147.1"/>
</dbReference>
<dbReference type="SMR" id="B5BA30"/>
<dbReference type="KEGG" id="sek:SSPA1390"/>
<dbReference type="HOGENOM" id="CLU_010245_4_1_6"/>
<dbReference type="Proteomes" id="UP000001869">
    <property type="component" value="Chromosome"/>
</dbReference>
<dbReference type="GO" id="GO:0070733">
    <property type="term" value="F:AMPylase activity"/>
    <property type="evidence" value="ECO:0007669"/>
    <property type="project" value="TreeGrafter"/>
</dbReference>
<dbReference type="GO" id="GO:0005524">
    <property type="term" value="F:ATP binding"/>
    <property type="evidence" value="ECO:0007669"/>
    <property type="project" value="UniProtKB-UniRule"/>
</dbReference>
<dbReference type="GO" id="GO:0000287">
    <property type="term" value="F:magnesium ion binding"/>
    <property type="evidence" value="ECO:0007669"/>
    <property type="project" value="UniProtKB-UniRule"/>
</dbReference>
<dbReference type="HAMAP" id="MF_00692">
    <property type="entry name" value="YdiU_SelO"/>
    <property type="match status" value="1"/>
</dbReference>
<dbReference type="InterPro" id="IPR054838">
    <property type="entry name" value="adnlytase_SelO"/>
</dbReference>
<dbReference type="InterPro" id="IPR003846">
    <property type="entry name" value="SelO"/>
</dbReference>
<dbReference type="NCBIfam" id="NF040880">
    <property type="entry name" value="adnlytase_SelO"/>
    <property type="match status" value="1"/>
</dbReference>
<dbReference type="NCBIfam" id="NF000658">
    <property type="entry name" value="PRK00029.1"/>
    <property type="match status" value="1"/>
</dbReference>
<dbReference type="PANTHER" id="PTHR32057">
    <property type="entry name" value="PROTEIN ADENYLYLTRANSFERASE SELO, MITOCHONDRIAL"/>
    <property type="match status" value="1"/>
</dbReference>
<dbReference type="PANTHER" id="PTHR32057:SF14">
    <property type="entry name" value="PROTEIN ADENYLYLTRANSFERASE SELO, MITOCHONDRIAL"/>
    <property type="match status" value="1"/>
</dbReference>
<dbReference type="Pfam" id="PF02696">
    <property type="entry name" value="SelO"/>
    <property type="match status" value="1"/>
</dbReference>
<comment type="function">
    <text evidence="1">Nucleotidyltransferase involved in the post-translational modification of proteins. It can catalyze the addition of adenosine monophosphate (AMP) or uridine monophosphate (UMP) to a protein, resulting in modifications known as AMPylation and UMPylation.</text>
</comment>
<comment type="catalytic activity">
    <reaction evidence="1">
        <text>L-seryl-[protein] + ATP = 3-O-(5'-adenylyl)-L-seryl-[protein] + diphosphate</text>
        <dbReference type="Rhea" id="RHEA:58120"/>
        <dbReference type="Rhea" id="RHEA-COMP:9863"/>
        <dbReference type="Rhea" id="RHEA-COMP:15073"/>
        <dbReference type="ChEBI" id="CHEBI:29999"/>
        <dbReference type="ChEBI" id="CHEBI:30616"/>
        <dbReference type="ChEBI" id="CHEBI:33019"/>
        <dbReference type="ChEBI" id="CHEBI:142516"/>
        <dbReference type="EC" id="2.7.7.108"/>
    </reaction>
</comment>
<comment type="catalytic activity">
    <reaction evidence="1">
        <text>L-threonyl-[protein] + ATP = 3-O-(5'-adenylyl)-L-threonyl-[protein] + diphosphate</text>
        <dbReference type="Rhea" id="RHEA:54292"/>
        <dbReference type="Rhea" id="RHEA-COMP:11060"/>
        <dbReference type="Rhea" id="RHEA-COMP:13847"/>
        <dbReference type="ChEBI" id="CHEBI:30013"/>
        <dbReference type="ChEBI" id="CHEBI:30616"/>
        <dbReference type="ChEBI" id="CHEBI:33019"/>
        <dbReference type="ChEBI" id="CHEBI:138113"/>
        <dbReference type="EC" id="2.7.7.108"/>
    </reaction>
</comment>
<comment type="catalytic activity">
    <reaction evidence="1">
        <text>L-tyrosyl-[protein] + ATP = O-(5'-adenylyl)-L-tyrosyl-[protein] + diphosphate</text>
        <dbReference type="Rhea" id="RHEA:54288"/>
        <dbReference type="Rhea" id="RHEA-COMP:10136"/>
        <dbReference type="Rhea" id="RHEA-COMP:13846"/>
        <dbReference type="ChEBI" id="CHEBI:30616"/>
        <dbReference type="ChEBI" id="CHEBI:33019"/>
        <dbReference type="ChEBI" id="CHEBI:46858"/>
        <dbReference type="ChEBI" id="CHEBI:83624"/>
        <dbReference type="EC" id="2.7.7.108"/>
    </reaction>
</comment>
<comment type="catalytic activity">
    <reaction evidence="1">
        <text>L-histidyl-[protein] + UTP = N(tele)-(5'-uridylyl)-L-histidyl-[protein] + diphosphate</text>
        <dbReference type="Rhea" id="RHEA:83891"/>
        <dbReference type="Rhea" id="RHEA-COMP:9745"/>
        <dbReference type="Rhea" id="RHEA-COMP:20239"/>
        <dbReference type="ChEBI" id="CHEBI:29979"/>
        <dbReference type="ChEBI" id="CHEBI:33019"/>
        <dbReference type="ChEBI" id="CHEBI:46398"/>
        <dbReference type="ChEBI" id="CHEBI:233474"/>
    </reaction>
</comment>
<comment type="catalytic activity">
    <reaction evidence="1">
        <text>L-seryl-[protein] + UTP = O-(5'-uridylyl)-L-seryl-[protein] + diphosphate</text>
        <dbReference type="Rhea" id="RHEA:64604"/>
        <dbReference type="Rhea" id="RHEA-COMP:9863"/>
        <dbReference type="Rhea" id="RHEA-COMP:16635"/>
        <dbReference type="ChEBI" id="CHEBI:29999"/>
        <dbReference type="ChEBI" id="CHEBI:33019"/>
        <dbReference type="ChEBI" id="CHEBI:46398"/>
        <dbReference type="ChEBI" id="CHEBI:156051"/>
    </reaction>
</comment>
<comment type="catalytic activity">
    <reaction evidence="1">
        <text>L-tyrosyl-[protein] + UTP = O-(5'-uridylyl)-L-tyrosyl-[protein] + diphosphate</text>
        <dbReference type="Rhea" id="RHEA:83887"/>
        <dbReference type="Rhea" id="RHEA-COMP:10136"/>
        <dbReference type="Rhea" id="RHEA-COMP:20238"/>
        <dbReference type="ChEBI" id="CHEBI:33019"/>
        <dbReference type="ChEBI" id="CHEBI:46398"/>
        <dbReference type="ChEBI" id="CHEBI:46858"/>
        <dbReference type="ChEBI" id="CHEBI:90602"/>
    </reaction>
</comment>
<comment type="cofactor">
    <cofactor evidence="1">
        <name>Mg(2+)</name>
        <dbReference type="ChEBI" id="CHEBI:18420"/>
    </cofactor>
    <cofactor evidence="1">
        <name>Mn(2+)</name>
        <dbReference type="ChEBI" id="CHEBI:29035"/>
    </cofactor>
</comment>
<comment type="similarity">
    <text evidence="1">Belongs to the SELO family.</text>
</comment>
<accession>B5BA30</accession>